<keyword id="KW-0687">Ribonucleoprotein</keyword>
<keyword id="KW-0689">Ribosomal protein</keyword>
<keyword id="KW-0694">RNA-binding</keyword>
<keyword id="KW-0699">rRNA-binding</keyword>
<keyword id="KW-0820">tRNA-binding</keyword>
<comment type="function">
    <text evidence="1">This is one of the proteins that bind and probably mediate the attachment of the 5S RNA into the large ribosomal subunit, where it forms part of the central protuberance. In the 70S ribosome it contacts protein S13 of the 30S subunit (bridge B1b), connecting the 2 subunits; this bridge is implicated in subunit movement. Contacts the P site tRNA; the 5S rRNA and some of its associated proteins might help stabilize positioning of ribosome-bound tRNAs.</text>
</comment>
<comment type="subunit">
    <text evidence="1">Part of the 50S ribosomal subunit; part of the 5S rRNA/L5/L18/L25 subcomplex. Contacts the 5S rRNA and the P site tRNA. Forms a bridge to the 30S subunit in the 70S ribosome.</text>
</comment>
<comment type="similarity">
    <text evidence="1">Belongs to the universal ribosomal protein uL5 family.</text>
</comment>
<sequence>MMPRLQEKYEKEVVSALMDKFGYKNIMEVPKLEKIVINMGVGEAKENQKSLEAAVEDLAKITGQKPILTKAKKSVANFKIREDMPLGCKVTLRKQNMYEFADKLINVALPRVRDFSGVSSKSFDGRGNYAIGIKEQLIFPEIEFDKIDKIRGMDIIFVTTAKTDEEARELLRFLGMPFAR</sequence>
<evidence type="ECO:0000255" key="1">
    <source>
        <dbReference type="HAMAP-Rule" id="MF_01333"/>
    </source>
</evidence>
<evidence type="ECO:0000305" key="2"/>
<proteinExistence type="inferred from homology"/>
<gene>
    <name evidence="1" type="primary">rplE</name>
    <name type="ordered locus">CLI_3651</name>
</gene>
<name>RL5_CLOBL</name>
<accession>A7GJ62</accession>
<dbReference type="EMBL" id="CP000728">
    <property type="protein sequence ID" value="ABS41246.1"/>
    <property type="molecule type" value="Genomic_DNA"/>
</dbReference>
<dbReference type="RefSeq" id="WP_003357534.1">
    <property type="nucleotide sequence ID" value="NC_009699.1"/>
</dbReference>
<dbReference type="SMR" id="A7GJ62"/>
<dbReference type="GeneID" id="5187726"/>
<dbReference type="KEGG" id="cbf:CLI_3651"/>
<dbReference type="HOGENOM" id="CLU_061015_2_1_9"/>
<dbReference type="Proteomes" id="UP000002410">
    <property type="component" value="Chromosome"/>
</dbReference>
<dbReference type="GO" id="GO:1990904">
    <property type="term" value="C:ribonucleoprotein complex"/>
    <property type="evidence" value="ECO:0007669"/>
    <property type="project" value="UniProtKB-KW"/>
</dbReference>
<dbReference type="GO" id="GO:0005840">
    <property type="term" value="C:ribosome"/>
    <property type="evidence" value="ECO:0007669"/>
    <property type="project" value="UniProtKB-KW"/>
</dbReference>
<dbReference type="GO" id="GO:0019843">
    <property type="term" value="F:rRNA binding"/>
    <property type="evidence" value="ECO:0007669"/>
    <property type="project" value="UniProtKB-UniRule"/>
</dbReference>
<dbReference type="GO" id="GO:0003735">
    <property type="term" value="F:structural constituent of ribosome"/>
    <property type="evidence" value="ECO:0007669"/>
    <property type="project" value="InterPro"/>
</dbReference>
<dbReference type="GO" id="GO:0000049">
    <property type="term" value="F:tRNA binding"/>
    <property type="evidence" value="ECO:0007669"/>
    <property type="project" value="UniProtKB-UniRule"/>
</dbReference>
<dbReference type="GO" id="GO:0006412">
    <property type="term" value="P:translation"/>
    <property type="evidence" value="ECO:0007669"/>
    <property type="project" value="UniProtKB-UniRule"/>
</dbReference>
<dbReference type="FunFam" id="3.30.1440.10:FF:000001">
    <property type="entry name" value="50S ribosomal protein L5"/>
    <property type="match status" value="1"/>
</dbReference>
<dbReference type="Gene3D" id="3.30.1440.10">
    <property type="match status" value="1"/>
</dbReference>
<dbReference type="HAMAP" id="MF_01333_B">
    <property type="entry name" value="Ribosomal_uL5_B"/>
    <property type="match status" value="1"/>
</dbReference>
<dbReference type="InterPro" id="IPR002132">
    <property type="entry name" value="Ribosomal_uL5"/>
</dbReference>
<dbReference type="InterPro" id="IPR020930">
    <property type="entry name" value="Ribosomal_uL5_bac-type"/>
</dbReference>
<dbReference type="InterPro" id="IPR031309">
    <property type="entry name" value="Ribosomal_uL5_C"/>
</dbReference>
<dbReference type="InterPro" id="IPR020929">
    <property type="entry name" value="Ribosomal_uL5_CS"/>
</dbReference>
<dbReference type="InterPro" id="IPR022803">
    <property type="entry name" value="Ribosomal_uL5_dom_sf"/>
</dbReference>
<dbReference type="InterPro" id="IPR031310">
    <property type="entry name" value="Ribosomal_uL5_N"/>
</dbReference>
<dbReference type="NCBIfam" id="NF000585">
    <property type="entry name" value="PRK00010.1"/>
    <property type="match status" value="1"/>
</dbReference>
<dbReference type="PANTHER" id="PTHR11994">
    <property type="entry name" value="60S RIBOSOMAL PROTEIN L11-RELATED"/>
    <property type="match status" value="1"/>
</dbReference>
<dbReference type="Pfam" id="PF00281">
    <property type="entry name" value="Ribosomal_L5"/>
    <property type="match status" value="1"/>
</dbReference>
<dbReference type="Pfam" id="PF00673">
    <property type="entry name" value="Ribosomal_L5_C"/>
    <property type="match status" value="1"/>
</dbReference>
<dbReference type="PIRSF" id="PIRSF002161">
    <property type="entry name" value="Ribosomal_L5"/>
    <property type="match status" value="1"/>
</dbReference>
<dbReference type="SUPFAM" id="SSF55282">
    <property type="entry name" value="RL5-like"/>
    <property type="match status" value="1"/>
</dbReference>
<dbReference type="PROSITE" id="PS00358">
    <property type="entry name" value="RIBOSOMAL_L5"/>
    <property type="match status" value="1"/>
</dbReference>
<reference key="1">
    <citation type="submission" date="2007-06" db="EMBL/GenBank/DDBJ databases">
        <authorList>
            <person name="Brinkac L.M."/>
            <person name="Daugherty S."/>
            <person name="Dodson R.J."/>
            <person name="Madupu R."/>
            <person name="Brown J.L."/>
            <person name="Bruce D."/>
            <person name="Detter C."/>
            <person name="Munk C."/>
            <person name="Smith L.A."/>
            <person name="Smith T.J."/>
            <person name="White O."/>
            <person name="Brettin T.S."/>
        </authorList>
    </citation>
    <scope>NUCLEOTIDE SEQUENCE [LARGE SCALE GENOMIC DNA]</scope>
    <source>
        <strain>Langeland / NCTC 10281 / Type F</strain>
    </source>
</reference>
<organism>
    <name type="scientific">Clostridium botulinum (strain Langeland / NCTC 10281 / Type F)</name>
    <dbReference type="NCBI Taxonomy" id="441772"/>
    <lineage>
        <taxon>Bacteria</taxon>
        <taxon>Bacillati</taxon>
        <taxon>Bacillota</taxon>
        <taxon>Clostridia</taxon>
        <taxon>Eubacteriales</taxon>
        <taxon>Clostridiaceae</taxon>
        <taxon>Clostridium</taxon>
    </lineage>
</organism>
<feature type="chain" id="PRO_1000052721" description="Large ribosomal subunit protein uL5">
    <location>
        <begin position="1"/>
        <end position="180"/>
    </location>
</feature>
<protein>
    <recommendedName>
        <fullName evidence="1">Large ribosomal subunit protein uL5</fullName>
    </recommendedName>
    <alternativeName>
        <fullName evidence="2">50S ribosomal protein L5</fullName>
    </alternativeName>
</protein>